<organism>
    <name type="scientific">Mus musculus</name>
    <name type="common">Mouse</name>
    <dbReference type="NCBI Taxonomy" id="10090"/>
    <lineage>
        <taxon>Eukaryota</taxon>
        <taxon>Metazoa</taxon>
        <taxon>Chordata</taxon>
        <taxon>Craniata</taxon>
        <taxon>Vertebrata</taxon>
        <taxon>Euteleostomi</taxon>
        <taxon>Mammalia</taxon>
        <taxon>Eutheria</taxon>
        <taxon>Euarchontoglires</taxon>
        <taxon>Glires</taxon>
        <taxon>Rodentia</taxon>
        <taxon>Myomorpha</taxon>
        <taxon>Muroidea</taxon>
        <taxon>Muridae</taxon>
        <taxon>Murinae</taxon>
        <taxon>Mus</taxon>
        <taxon>Mus</taxon>
    </lineage>
</organism>
<protein>
    <recommendedName>
        <fullName>Ankyrin repeat domain-containing protein 22</fullName>
    </recommendedName>
</protein>
<reference key="1">
    <citation type="journal article" date="2005" name="Science">
        <title>The transcriptional landscape of the mammalian genome.</title>
        <authorList>
            <person name="Carninci P."/>
            <person name="Kasukawa T."/>
            <person name="Katayama S."/>
            <person name="Gough J."/>
            <person name="Frith M.C."/>
            <person name="Maeda N."/>
            <person name="Oyama R."/>
            <person name="Ravasi T."/>
            <person name="Lenhard B."/>
            <person name="Wells C."/>
            <person name="Kodzius R."/>
            <person name="Shimokawa K."/>
            <person name="Bajic V.B."/>
            <person name="Brenner S.E."/>
            <person name="Batalov S."/>
            <person name="Forrest A.R."/>
            <person name="Zavolan M."/>
            <person name="Davis M.J."/>
            <person name="Wilming L.G."/>
            <person name="Aidinis V."/>
            <person name="Allen J.E."/>
            <person name="Ambesi-Impiombato A."/>
            <person name="Apweiler R."/>
            <person name="Aturaliya R.N."/>
            <person name="Bailey T.L."/>
            <person name="Bansal M."/>
            <person name="Baxter L."/>
            <person name="Beisel K.W."/>
            <person name="Bersano T."/>
            <person name="Bono H."/>
            <person name="Chalk A.M."/>
            <person name="Chiu K.P."/>
            <person name="Choudhary V."/>
            <person name="Christoffels A."/>
            <person name="Clutterbuck D.R."/>
            <person name="Crowe M.L."/>
            <person name="Dalla E."/>
            <person name="Dalrymple B.P."/>
            <person name="de Bono B."/>
            <person name="Della Gatta G."/>
            <person name="di Bernardo D."/>
            <person name="Down T."/>
            <person name="Engstrom P."/>
            <person name="Fagiolini M."/>
            <person name="Faulkner G."/>
            <person name="Fletcher C.F."/>
            <person name="Fukushima T."/>
            <person name="Furuno M."/>
            <person name="Futaki S."/>
            <person name="Gariboldi M."/>
            <person name="Georgii-Hemming P."/>
            <person name="Gingeras T.R."/>
            <person name="Gojobori T."/>
            <person name="Green R.E."/>
            <person name="Gustincich S."/>
            <person name="Harbers M."/>
            <person name="Hayashi Y."/>
            <person name="Hensch T.K."/>
            <person name="Hirokawa N."/>
            <person name="Hill D."/>
            <person name="Huminiecki L."/>
            <person name="Iacono M."/>
            <person name="Ikeo K."/>
            <person name="Iwama A."/>
            <person name="Ishikawa T."/>
            <person name="Jakt M."/>
            <person name="Kanapin A."/>
            <person name="Katoh M."/>
            <person name="Kawasawa Y."/>
            <person name="Kelso J."/>
            <person name="Kitamura H."/>
            <person name="Kitano H."/>
            <person name="Kollias G."/>
            <person name="Krishnan S.P."/>
            <person name="Kruger A."/>
            <person name="Kummerfeld S.K."/>
            <person name="Kurochkin I.V."/>
            <person name="Lareau L.F."/>
            <person name="Lazarevic D."/>
            <person name="Lipovich L."/>
            <person name="Liu J."/>
            <person name="Liuni S."/>
            <person name="McWilliam S."/>
            <person name="Madan Babu M."/>
            <person name="Madera M."/>
            <person name="Marchionni L."/>
            <person name="Matsuda H."/>
            <person name="Matsuzawa S."/>
            <person name="Miki H."/>
            <person name="Mignone F."/>
            <person name="Miyake S."/>
            <person name="Morris K."/>
            <person name="Mottagui-Tabar S."/>
            <person name="Mulder N."/>
            <person name="Nakano N."/>
            <person name="Nakauchi H."/>
            <person name="Ng P."/>
            <person name="Nilsson R."/>
            <person name="Nishiguchi S."/>
            <person name="Nishikawa S."/>
            <person name="Nori F."/>
            <person name="Ohara O."/>
            <person name="Okazaki Y."/>
            <person name="Orlando V."/>
            <person name="Pang K.C."/>
            <person name="Pavan W.J."/>
            <person name="Pavesi G."/>
            <person name="Pesole G."/>
            <person name="Petrovsky N."/>
            <person name="Piazza S."/>
            <person name="Reed J."/>
            <person name="Reid J.F."/>
            <person name="Ring B.Z."/>
            <person name="Ringwald M."/>
            <person name="Rost B."/>
            <person name="Ruan Y."/>
            <person name="Salzberg S.L."/>
            <person name="Sandelin A."/>
            <person name="Schneider C."/>
            <person name="Schoenbach C."/>
            <person name="Sekiguchi K."/>
            <person name="Semple C.A."/>
            <person name="Seno S."/>
            <person name="Sessa L."/>
            <person name="Sheng Y."/>
            <person name="Shibata Y."/>
            <person name="Shimada H."/>
            <person name="Shimada K."/>
            <person name="Silva D."/>
            <person name="Sinclair B."/>
            <person name="Sperling S."/>
            <person name="Stupka E."/>
            <person name="Sugiura K."/>
            <person name="Sultana R."/>
            <person name="Takenaka Y."/>
            <person name="Taki K."/>
            <person name="Tammoja K."/>
            <person name="Tan S.L."/>
            <person name="Tang S."/>
            <person name="Taylor M.S."/>
            <person name="Tegner J."/>
            <person name="Teichmann S.A."/>
            <person name="Ueda H.R."/>
            <person name="van Nimwegen E."/>
            <person name="Verardo R."/>
            <person name="Wei C.L."/>
            <person name="Yagi K."/>
            <person name="Yamanishi H."/>
            <person name="Zabarovsky E."/>
            <person name="Zhu S."/>
            <person name="Zimmer A."/>
            <person name="Hide W."/>
            <person name="Bult C."/>
            <person name="Grimmond S.M."/>
            <person name="Teasdale R.D."/>
            <person name="Liu E.T."/>
            <person name="Brusic V."/>
            <person name="Quackenbush J."/>
            <person name="Wahlestedt C."/>
            <person name="Mattick J.S."/>
            <person name="Hume D.A."/>
            <person name="Kai C."/>
            <person name="Sasaki D."/>
            <person name="Tomaru Y."/>
            <person name="Fukuda S."/>
            <person name="Kanamori-Katayama M."/>
            <person name="Suzuki M."/>
            <person name="Aoki J."/>
            <person name="Arakawa T."/>
            <person name="Iida J."/>
            <person name="Imamura K."/>
            <person name="Itoh M."/>
            <person name="Kato T."/>
            <person name="Kawaji H."/>
            <person name="Kawagashira N."/>
            <person name="Kawashima T."/>
            <person name="Kojima M."/>
            <person name="Kondo S."/>
            <person name="Konno H."/>
            <person name="Nakano K."/>
            <person name="Ninomiya N."/>
            <person name="Nishio T."/>
            <person name="Okada M."/>
            <person name="Plessy C."/>
            <person name="Shibata K."/>
            <person name="Shiraki T."/>
            <person name="Suzuki S."/>
            <person name="Tagami M."/>
            <person name="Waki K."/>
            <person name="Watahiki A."/>
            <person name="Okamura-Oho Y."/>
            <person name="Suzuki H."/>
            <person name="Kawai J."/>
            <person name="Hayashizaki Y."/>
        </authorList>
    </citation>
    <scope>NUCLEOTIDE SEQUENCE [LARGE SCALE MRNA]</scope>
    <source>
        <strain>C57BL/6J</strain>
        <tissue>Head</tissue>
        <tissue>Skin</tissue>
    </source>
</reference>
<name>ANR22_MOUSE</name>
<gene>
    <name type="primary">Ankrd22</name>
</gene>
<proteinExistence type="evidence at transcript level"/>
<evidence type="ECO:0000305" key="1"/>
<dbReference type="EMBL" id="AK012869">
    <property type="protein sequence ID" value="BAB28523.1"/>
    <property type="molecule type" value="mRNA"/>
</dbReference>
<dbReference type="EMBL" id="AK017360">
    <property type="protein sequence ID" value="BAB30707.1"/>
    <property type="molecule type" value="mRNA"/>
</dbReference>
<dbReference type="EMBL" id="AK017408">
    <property type="protein sequence ID" value="BAB30731.1"/>
    <property type="molecule type" value="mRNA"/>
</dbReference>
<dbReference type="EMBL" id="AK037242">
    <property type="protein sequence ID" value="BAC29772.1"/>
    <property type="molecule type" value="mRNA"/>
</dbReference>
<dbReference type="CCDS" id="CCDS37963.1"/>
<dbReference type="RefSeq" id="NP_077166.4">
    <property type="nucleotide sequence ID" value="NM_024204.6"/>
</dbReference>
<dbReference type="SMR" id="Q9D3J5"/>
<dbReference type="BioGRID" id="206333">
    <property type="interactions" value="1"/>
</dbReference>
<dbReference type="FunCoup" id="Q9D3J5">
    <property type="interactions" value="8"/>
</dbReference>
<dbReference type="IntAct" id="Q9D3J5">
    <property type="interactions" value="1"/>
</dbReference>
<dbReference type="STRING" id="10090.ENSMUSP00000025686"/>
<dbReference type="PhosphoSitePlus" id="Q9D3J5"/>
<dbReference type="PaxDb" id="10090-ENSMUSP00000025686"/>
<dbReference type="ProteomicsDB" id="296314"/>
<dbReference type="Antibodypedia" id="2542">
    <property type="antibodies" value="100 antibodies from 17 providers"/>
</dbReference>
<dbReference type="DNASU" id="52024"/>
<dbReference type="Ensembl" id="ENSMUST00000025686.9">
    <property type="protein sequence ID" value="ENSMUSP00000025686.8"/>
    <property type="gene ID" value="ENSMUSG00000024774.17"/>
</dbReference>
<dbReference type="GeneID" id="52024"/>
<dbReference type="KEGG" id="mmu:52024"/>
<dbReference type="UCSC" id="uc008hgb.1">
    <property type="organism name" value="mouse"/>
</dbReference>
<dbReference type="AGR" id="MGI:1277101"/>
<dbReference type="CTD" id="118932"/>
<dbReference type="MGI" id="MGI:1277101">
    <property type="gene designation" value="Ankrd22"/>
</dbReference>
<dbReference type="VEuPathDB" id="HostDB:ENSMUSG00000024774"/>
<dbReference type="eggNOG" id="KOG0504">
    <property type="taxonomic scope" value="Eukaryota"/>
</dbReference>
<dbReference type="GeneTree" id="ENSGT00390000009005"/>
<dbReference type="HOGENOM" id="CLU_121978_0_0_1"/>
<dbReference type="InParanoid" id="Q9D3J5"/>
<dbReference type="OMA" id="CINVQDG"/>
<dbReference type="OrthoDB" id="2157354at2759"/>
<dbReference type="PhylomeDB" id="Q9D3J5"/>
<dbReference type="TreeFam" id="TF332383"/>
<dbReference type="BioGRID-ORCS" id="52024">
    <property type="hits" value="3 hits in 78 CRISPR screens"/>
</dbReference>
<dbReference type="ChiTaRS" id="Ankrd22">
    <property type="organism name" value="mouse"/>
</dbReference>
<dbReference type="PRO" id="PR:Q9D3J5"/>
<dbReference type="Proteomes" id="UP000000589">
    <property type="component" value="Chromosome 19"/>
</dbReference>
<dbReference type="RNAct" id="Q9D3J5">
    <property type="molecule type" value="protein"/>
</dbReference>
<dbReference type="Bgee" id="ENSMUSG00000024774">
    <property type="expression patterns" value="Expressed in granulocyte and 74 other cell types or tissues"/>
</dbReference>
<dbReference type="Gene3D" id="1.25.40.20">
    <property type="entry name" value="Ankyrin repeat-containing domain"/>
    <property type="match status" value="2"/>
</dbReference>
<dbReference type="InterPro" id="IPR002110">
    <property type="entry name" value="Ankyrin_rpt"/>
</dbReference>
<dbReference type="InterPro" id="IPR036770">
    <property type="entry name" value="Ankyrin_rpt-contain_sf"/>
</dbReference>
<dbReference type="InterPro" id="IPR042802">
    <property type="entry name" value="ANR22"/>
</dbReference>
<dbReference type="PANTHER" id="PTHR47276">
    <property type="entry name" value="ANKYRIN REPEAT DOMAIN-CONTAINING PROTEIN 22"/>
    <property type="match status" value="1"/>
</dbReference>
<dbReference type="PANTHER" id="PTHR47276:SF1">
    <property type="entry name" value="ANKYRIN REPEAT DOMAIN-CONTAINING PROTEIN 22"/>
    <property type="match status" value="1"/>
</dbReference>
<dbReference type="Pfam" id="PF12796">
    <property type="entry name" value="Ank_2"/>
    <property type="match status" value="2"/>
</dbReference>
<dbReference type="PRINTS" id="PR01415">
    <property type="entry name" value="ANKYRIN"/>
</dbReference>
<dbReference type="SMART" id="SM00248">
    <property type="entry name" value="ANK"/>
    <property type="match status" value="3"/>
</dbReference>
<dbReference type="SUPFAM" id="SSF48403">
    <property type="entry name" value="Ankyrin repeat"/>
    <property type="match status" value="1"/>
</dbReference>
<dbReference type="PROSITE" id="PS50297">
    <property type="entry name" value="ANK_REP_REGION"/>
    <property type="match status" value="1"/>
</dbReference>
<dbReference type="PROSITE" id="PS50088">
    <property type="entry name" value="ANK_REPEAT"/>
    <property type="match status" value="2"/>
</dbReference>
<accession>Q9D3J5</accession>
<accession>Q9CZ89</accession>
<accession>Q9D3I2</accession>
<keyword id="KW-0040">ANK repeat</keyword>
<keyword id="KW-1185">Reference proteome</keyword>
<keyword id="KW-0677">Repeat</keyword>
<sequence>MGILYSEPICQAAYQNDLGQVWRWAKESNHYVDVQDSFNGDTPLICACRRGHLRIVSFLLRRNADVNLKNLKERTCLHYAVKKRFTFFDYLLIILLMPVLLIGYFLMVSKTKQNETLVRMLLNAGVEVNATDCDGYTALHYACQMKNQTLIPLLLEAHADPMIKNKHGESSLDIAQRLKFSQIALMLKRAS</sequence>
<feature type="chain" id="PRO_0000320069" description="Ankyrin repeat domain-containing protein 22">
    <location>
        <begin position="1"/>
        <end position="191"/>
    </location>
</feature>
<feature type="repeat" description="ANK 1">
    <location>
        <begin position="39"/>
        <end position="68"/>
    </location>
</feature>
<feature type="repeat" description="ANK 2">
    <location>
        <begin position="72"/>
        <end position="100"/>
    </location>
</feature>
<feature type="repeat" description="ANK 3">
    <location>
        <begin position="101"/>
        <end position="130"/>
    </location>
</feature>
<feature type="repeat" description="ANK 4">
    <location>
        <begin position="134"/>
        <end position="163"/>
    </location>
</feature>
<feature type="sequence conflict" description="In Ref. 1; BAB30731." evidence="1" ref="1">
    <original>E</original>
    <variation>D</variation>
    <location>
        <position position="7"/>
    </location>
</feature>
<feature type="sequence conflict" description="In Ref. 1; BAB28523." evidence="1" ref="1">
    <original>L</original>
    <variation>P</variation>
    <location>
        <position position="53"/>
    </location>
</feature>